<sequence length="204" mass="22241">MFITLEGGEGVGKTTQQALLAERLQREGYACVSTREPGGTALGEALRELLLHGDPLTPLAELLLYAADRAEHVNKVIAPALAVGQVVICDRFTDSTLAYQGYGRGLNLEQIRQLNHLATGGLQPQLTLWLDLAPEVGLARSRLGDKLEQEHLEFHRRVYRGFQALAAAEPQRIVRIDAGGSPLEVAARIWSVVKPRLLAAVPRP</sequence>
<keyword id="KW-0067">ATP-binding</keyword>
<keyword id="KW-0418">Kinase</keyword>
<keyword id="KW-0545">Nucleotide biosynthesis</keyword>
<keyword id="KW-0547">Nucleotide-binding</keyword>
<keyword id="KW-0808">Transferase</keyword>
<proteinExistence type="inferred from homology"/>
<reference key="1">
    <citation type="journal article" date="2007" name="ISME J.">
        <title>Population level functional diversity in a microbial community revealed by comparative genomic and metagenomic analyses.</title>
        <authorList>
            <person name="Bhaya D."/>
            <person name="Grossman A.R."/>
            <person name="Steunou A.-S."/>
            <person name="Khuri N."/>
            <person name="Cohan F.M."/>
            <person name="Hamamura N."/>
            <person name="Melendrez M.C."/>
            <person name="Bateson M.M."/>
            <person name="Ward D.M."/>
            <person name="Heidelberg J.F."/>
        </authorList>
    </citation>
    <scope>NUCLEOTIDE SEQUENCE [LARGE SCALE GENOMIC DNA]</scope>
    <source>
        <strain>JA-3-3Ab</strain>
    </source>
</reference>
<organism>
    <name type="scientific">Synechococcus sp. (strain JA-3-3Ab)</name>
    <name type="common">Cyanobacteria bacterium Yellowstone A-Prime</name>
    <dbReference type="NCBI Taxonomy" id="321327"/>
    <lineage>
        <taxon>Bacteria</taxon>
        <taxon>Bacillati</taxon>
        <taxon>Cyanobacteriota</taxon>
        <taxon>Cyanophyceae</taxon>
        <taxon>Synechococcales</taxon>
        <taxon>Synechococcaceae</taxon>
        <taxon>Synechococcus</taxon>
    </lineage>
</organism>
<protein>
    <recommendedName>
        <fullName evidence="1">Thymidylate kinase</fullName>
        <ecNumber evidence="1">2.7.4.9</ecNumber>
    </recommendedName>
    <alternativeName>
        <fullName evidence="1">dTMP kinase</fullName>
    </alternativeName>
</protein>
<name>KTHY_SYNJA</name>
<feature type="chain" id="PRO_1000097437" description="Thymidylate kinase">
    <location>
        <begin position="1"/>
        <end position="204"/>
    </location>
</feature>
<feature type="binding site" evidence="1">
    <location>
        <begin position="7"/>
        <end position="14"/>
    </location>
    <ligand>
        <name>ATP</name>
        <dbReference type="ChEBI" id="CHEBI:30616"/>
    </ligand>
</feature>
<dbReference type="EC" id="2.7.4.9" evidence="1"/>
<dbReference type="EMBL" id="CP000239">
    <property type="protein sequence ID" value="ABD00932.1"/>
    <property type="molecule type" value="Genomic_DNA"/>
</dbReference>
<dbReference type="RefSeq" id="WP_011431602.1">
    <property type="nucleotide sequence ID" value="NC_007775.1"/>
</dbReference>
<dbReference type="SMR" id="Q2JR37"/>
<dbReference type="STRING" id="321327.CYA_2830"/>
<dbReference type="KEGG" id="cya:CYA_2830"/>
<dbReference type="eggNOG" id="COG0125">
    <property type="taxonomic scope" value="Bacteria"/>
</dbReference>
<dbReference type="HOGENOM" id="CLU_049131_0_2_3"/>
<dbReference type="OrthoDB" id="9774907at2"/>
<dbReference type="Proteomes" id="UP000008818">
    <property type="component" value="Chromosome"/>
</dbReference>
<dbReference type="GO" id="GO:0005829">
    <property type="term" value="C:cytosol"/>
    <property type="evidence" value="ECO:0007669"/>
    <property type="project" value="TreeGrafter"/>
</dbReference>
<dbReference type="GO" id="GO:0005524">
    <property type="term" value="F:ATP binding"/>
    <property type="evidence" value="ECO:0007669"/>
    <property type="project" value="UniProtKB-UniRule"/>
</dbReference>
<dbReference type="GO" id="GO:0004798">
    <property type="term" value="F:dTMP kinase activity"/>
    <property type="evidence" value="ECO:0007669"/>
    <property type="project" value="UniProtKB-UniRule"/>
</dbReference>
<dbReference type="GO" id="GO:0006233">
    <property type="term" value="P:dTDP biosynthetic process"/>
    <property type="evidence" value="ECO:0007669"/>
    <property type="project" value="InterPro"/>
</dbReference>
<dbReference type="GO" id="GO:0006235">
    <property type="term" value="P:dTTP biosynthetic process"/>
    <property type="evidence" value="ECO:0007669"/>
    <property type="project" value="UniProtKB-UniRule"/>
</dbReference>
<dbReference type="GO" id="GO:0006227">
    <property type="term" value="P:dUDP biosynthetic process"/>
    <property type="evidence" value="ECO:0007669"/>
    <property type="project" value="TreeGrafter"/>
</dbReference>
<dbReference type="CDD" id="cd01672">
    <property type="entry name" value="TMPK"/>
    <property type="match status" value="1"/>
</dbReference>
<dbReference type="FunFam" id="3.40.50.300:FF:000225">
    <property type="entry name" value="Thymidylate kinase"/>
    <property type="match status" value="1"/>
</dbReference>
<dbReference type="Gene3D" id="3.40.50.300">
    <property type="entry name" value="P-loop containing nucleotide triphosphate hydrolases"/>
    <property type="match status" value="1"/>
</dbReference>
<dbReference type="HAMAP" id="MF_00165">
    <property type="entry name" value="Thymidylate_kinase"/>
    <property type="match status" value="1"/>
</dbReference>
<dbReference type="InterPro" id="IPR027417">
    <property type="entry name" value="P-loop_NTPase"/>
</dbReference>
<dbReference type="InterPro" id="IPR039430">
    <property type="entry name" value="Thymidylate_kin-like_dom"/>
</dbReference>
<dbReference type="InterPro" id="IPR018095">
    <property type="entry name" value="Thymidylate_kin_CS"/>
</dbReference>
<dbReference type="InterPro" id="IPR018094">
    <property type="entry name" value="Thymidylate_kinase"/>
</dbReference>
<dbReference type="NCBIfam" id="TIGR00041">
    <property type="entry name" value="DTMP_kinase"/>
    <property type="match status" value="1"/>
</dbReference>
<dbReference type="PANTHER" id="PTHR10344">
    <property type="entry name" value="THYMIDYLATE KINASE"/>
    <property type="match status" value="1"/>
</dbReference>
<dbReference type="PANTHER" id="PTHR10344:SF4">
    <property type="entry name" value="UMP-CMP KINASE 2, MITOCHONDRIAL"/>
    <property type="match status" value="1"/>
</dbReference>
<dbReference type="Pfam" id="PF02223">
    <property type="entry name" value="Thymidylate_kin"/>
    <property type="match status" value="1"/>
</dbReference>
<dbReference type="SUPFAM" id="SSF52540">
    <property type="entry name" value="P-loop containing nucleoside triphosphate hydrolases"/>
    <property type="match status" value="1"/>
</dbReference>
<dbReference type="PROSITE" id="PS01331">
    <property type="entry name" value="THYMIDYLATE_KINASE"/>
    <property type="match status" value="1"/>
</dbReference>
<evidence type="ECO:0000255" key="1">
    <source>
        <dbReference type="HAMAP-Rule" id="MF_00165"/>
    </source>
</evidence>
<accession>Q2JR37</accession>
<comment type="function">
    <text evidence="1">Phosphorylation of dTMP to form dTDP in both de novo and salvage pathways of dTTP synthesis.</text>
</comment>
<comment type="catalytic activity">
    <reaction evidence="1">
        <text>dTMP + ATP = dTDP + ADP</text>
        <dbReference type="Rhea" id="RHEA:13517"/>
        <dbReference type="ChEBI" id="CHEBI:30616"/>
        <dbReference type="ChEBI" id="CHEBI:58369"/>
        <dbReference type="ChEBI" id="CHEBI:63528"/>
        <dbReference type="ChEBI" id="CHEBI:456216"/>
        <dbReference type="EC" id="2.7.4.9"/>
    </reaction>
</comment>
<comment type="similarity">
    <text evidence="1">Belongs to the thymidylate kinase family.</text>
</comment>
<gene>
    <name evidence="1" type="primary">tmk</name>
    <name type="ordered locus">CYA_2830</name>
</gene>